<organism>
    <name type="scientific">Homo sapiens</name>
    <name type="common">Human</name>
    <dbReference type="NCBI Taxonomy" id="9606"/>
    <lineage>
        <taxon>Eukaryota</taxon>
        <taxon>Metazoa</taxon>
        <taxon>Chordata</taxon>
        <taxon>Craniata</taxon>
        <taxon>Vertebrata</taxon>
        <taxon>Euteleostomi</taxon>
        <taxon>Mammalia</taxon>
        <taxon>Eutheria</taxon>
        <taxon>Euarchontoglires</taxon>
        <taxon>Primates</taxon>
        <taxon>Haplorrhini</taxon>
        <taxon>Catarrhini</taxon>
        <taxon>Hominidae</taxon>
        <taxon>Homo</taxon>
    </lineage>
</organism>
<protein>
    <recommendedName>
        <fullName evidence="18">Cytosolic purine 5'-nucleotidase</fullName>
        <ecNumber evidence="4 5 6 11">3.1.3.5</ecNumber>
        <ecNumber evidence="4 5 6 11">3.1.3.99</ecNumber>
    </recommendedName>
    <alternativeName>
        <fullName evidence="14">Cytosolic 5'-nucleotidase II</fullName>
        <shortName evidence="14">cN-II</shortName>
    </alternativeName>
    <alternativeName>
        <fullName evidence="16">Cytosolic IMP/GMP-specific 5'-nucleotidase</fullName>
    </alternativeName>
    <alternativeName>
        <fullName evidence="18">Cytosolic nucleoside phosphotransferase 5'N</fullName>
        <ecNumber evidence="6 11">2.7.1.77</ecNumber>
    </alternativeName>
    <alternativeName>
        <fullName evidence="15">High Km 5'-nucleotidase</fullName>
    </alternativeName>
</protein>
<gene>
    <name evidence="20" type="primary">NT5C2</name>
    <name type="synonym">NT5B</name>
    <name type="synonym">NT5CP</name>
    <name type="synonym">PNT5</name>
</gene>
<feature type="chain" id="PRO_0000064389" description="Cytosolic purine 5'-nucleotidase">
    <location>
        <begin position="1"/>
        <end position="561"/>
    </location>
</feature>
<feature type="region of interest" description="Disordered" evidence="3">
    <location>
        <begin position="538"/>
        <end position="561"/>
    </location>
</feature>
<feature type="region of interest" description="Required for tetramer assembly" evidence="4">
    <location>
        <begin position="548"/>
        <end position="561"/>
    </location>
</feature>
<feature type="compositionally biased region" description="Acidic residues" evidence="3">
    <location>
        <begin position="550"/>
        <end position="561"/>
    </location>
</feature>
<feature type="active site" description="Nucleophile" evidence="19">
    <location>
        <position position="52"/>
    </location>
</feature>
<feature type="active site" description="Proton donor" evidence="19">
    <location>
        <position position="54"/>
    </location>
</feature>
<feature type="binding site" evidence="8 28">
    <location>
        <position position="52"/>
    </location>
    <ligand>
        <name>GMP</name>
        <dbReference type="ChEBI" id="CHEBI:58115"/>
    </ligand>
</feature>
<feature type="binding site" evidence="8 24 25">
    <location>
        <position position="52"/>
    </location>
    <ligand>
        <name>IMP</name>
        <dbReference type="ChEBI" id="CHEBI:58053"/>
    </ligand>
</feature>
<feature type="binding site" evidence="7 8 21 22 23 24 25 27 28 29 30">
    <location>
        <position position="52"/>
    </location>
    <ligand>
        <name>Mg(2+)</name>
        <dbReference type="ChEBI" id="CHEBI:18420"/>
    </ligand>
</feature>
<feature type="binding site" evidence="8 28">
    <location>
        <position position="54"/>
    </location>
    <ligand>
        <name>GMP</name>
        <dbReference type="ChEBI" id="CHEBI:58115"/>
    </ligand>
</feature>
<feature type="binding site" evidence="8 24 25">
    <location>
        <position position="54"/>
    </location>
    <ligand>
        <name>IMP</name>
        <dbReference type="ChEBI" id="CHEBI:58053"/>
    </ligand>
</feature>
<feature type="binding site" evidence="7 8 21 22 23 24 25 27 28 29 30">
    <location>
        <position position="54"/>
    </location>
    <ligand>
        <name>Mg(2+)</name>
        <dbReference type="ChEBI" id="CHEBI:18420"/>
    </ligand>
</feature>
<feature type="binding site" evidence="8 24 31">
    <location>
        <position position="144"/>
    </location>
    <ligand>
        <name>(2R)-2,3-bisphosphoglycerate</name>
        <dbReference type="ChEBI" id="CHEBI:58248"/>
        <note>allosteric activator</note>
    </ligand>
</feature>
<feature type="binding site" evidence="8 25 29 30">
    <location>
        <position position="144"/>
    </location>
    <ligand>
        <name>ATP</name>
        <dbReference type="ChEBI" id="CHEBI:30616"/>
        <note>allosteric activator</note>
    </ligand>
</feature>
<feature type="binding site" evidence="8 27">
    <location>
        <position position="144"/>
    </location>
    <ligand>
        <name>dATP</name>
        <dbReference type="ChEBI" id="CHEBI:61404"/>
        <note>allosteric activator</note>
    </ligand>
</feature>
<feature type="binding site" evidence="7 22">
    <location>
        <position position="154"/>
    </location>
    <ligand>
        <name>adenosine</name>
        <dbReference type="ChEBI" id="CHEBI:16335"/>
        <label>1</label>
        <note>allosteric activator</note>
    </ligand>
</feature>
<feature type="binding site" evidence="8 25 29 30">
    <location>
        <position position="154"/>
    </location>
    <ligand>
        <name>ATP</name>
        <dbReference type="ChEBI" id="CHEBI:30616"/>
        <note>allosteric activator</note>
    </ligand>
</feature>
<feature type="binding site" evidence="8 27">
    <location>
        <position position="154"/>
    </location>
    <ligand>
        <name>dATP</name>
        <dbReference type="ChEBI" id="CHEBI:61404"/>
        <note>allosteric activator</note>
    </ligand>
</feature>
<feature type="binding site" evidence="8 28">
    <location>
        <position position="154"/>
    </location>
    <ligand>
        <name>P(1),P(4)-bis(5'-adenosyl) tetraphosphate</name>
        <dbReference type="ChEBI" id="CHEBI:58141"/>
        <note>allosteric activator</note>
    </ligand>
</feature>
<feature type="binding site" evidence="8 28">
    <location>
        <position position="202"/>
    </location>
    <ligand>
        <name>GMP</name>
        <dbReference type="ChEBI" id="CHEBI:58115"/>
    </ligand>
</feature>
<feature type="binding site" evidence="8 24 25">
    <location>
        <position position="202"/>
    </location>
    <ligand>
        <name>IMP</name>
        <dbReference type="ChEBI" id="CHEBI:58053"/>
    </ligand>
</feature>
<feature type="binding site" evidence="8 28">
    <location>
        <position position="206"/>
    </location>
    <ligand>
        <name>GMP</name>
        <dbReference type="ChEBI" id="CHEBI:58115"/>
    </ligand>
</feature>
<feature type="binding site" evidence="8 24 25">
    <location>
        <position position="206"/>
    </location>
    <ligand>
        <name>IMP</name>
        <dbReference type="ChEBI" id="CHEBI:58053"/>
    </ligand>
</feature>
<feature type="binding site" evidence="8 28">
    <location>
        <position position="215"/>
    </location>
    <ligand>
        <name>GMP</name>
        <dbReference type="ChEBI" id="CHEBI:58115"/>
    </ligand>
</feature>
<feature type="binding site" evidence="8 24 25">
    <location>
        <position position="215"/>
    </location>
    <ligand>
        <name>IMP</name>
        <dbReference type="ChEBI" id="CHEBI:58053"/>
    </ligand>
</feature>
<feature type="binding site" evidence="8 28">
    <location>
        <position position="249"/>
    </location>
    <ligand>
        <name>GMP</name>
        <dbReference type="ChEBI" id="CHEBI:58115"/>
    </ligand>
</feature>
<feature type="binding site" evidence="8 24 25">
    <location>
        <position position="249"/>
    </location>
    <ligand>
        <name>IMP</name>
        <dbReference type="ChEBI" id="CHEBI:58053"/>
    </ligand>
</feature>
<feature type="binding site" evidence="8 28">
    <location>
        <position position="250"/>
    </location>
    <ligand>
        <name>GMP</name>
        <dbReference type="ChEBI" id="CHEBI:58115"/>
    </ligand>
</feature>
<feature type="binding site" evidence="8 24 25">
    <location>
        <position position="250"/>
    </location>
    <ligand>
        <name>IMP</name>
        <dbReference type="ChEBI" id="CHEBI:58053"/>
    </ligand>
</feature>
<feature type="binding site" evidence="8 24 25">
    <location>
        <position position="251"/>
    </location>
    <ligand>
        <name>IMP</name>
        <dbReference type="ChEBI" id="CHEBI:58053"/>
    </ligand>
</feature>
<feature type="binding site" evidence="8 28">
    <location>
        <position position="292"/>
    </location>
    <ligand>
        <name>GMP</name>
        <dbReference type="ChEBI" id="CHEBI:58115"/>
    </ligand>
</feature>
<feature type="binding site" evidence="8 24 25">
    <location>
        <position position="292"/>
    </location>
    <ligand>
        <name>IMP</name>
        <dbReference type="ChEBI" id="CHEBI:58053"/>
    </ligand>
</feature>
<feature type="binding site" evidence="7 8 21 22 23">
    <location>
        <position position="351"/>
    </location>
    <ligand>
        <name>Mg(2+)</name>
        <dbReference type="ChEBI" id="CHEBI:18420"/>
    </ligand>
</feature>
<feature type="binding site" evidence="8 24 31">
    <location>
        <position position="362"/>
    </location>
    <ligand>
        <name>(2R)-2,3-bisphosphoglycerate</name>
        <dbReference type="ChEBI" id="CHEBI:58248"/>
        <note>allosteric activator</note>
    </ligand>
</feature>
<feature type="binding site" evidence="8 28">
    <location>
        <position position="362"/>
    </location>
    <ligand>
        <name>P(1),P(4)-bis(5'-adenosyl) tetraphosphate</name>
        <dbReference type="ChEBI" id="CHEBI:58141"/>
        <note>allosteric activator</note>
    </ligand>
</feature>
<feature type="binding site" evidence="7 22">
    <location>
        <position position="436"/>
    </location>
    <ligand>
        <name>adenosine</name>
        <dbReference type="ChEBI" id="CHEBI:16335"/>
        <label>2</label>
        <note>allosteric activator</note>
    </ligand>
</feature>
<feature type="binding site" evidence="7 22">
    <location>
        <position position="453"/>
    </location>
    <ligand>
        <name>adenosine</name>
        <dbReference type="ChEBI" id="CHEBI:16335"/>
        <label>1</label>
        <note>allosteric activator</note>
    </ligand>
</feature>
<feature type="binding site" evidence="8 25 29 30">
    <location>
        <position position="453"/>
    </location>
    <ligand>
        <name>ATP</name>
        <dbReference type="ChEBI" id="CHEBI:30616"/>
        <note>allosteric activator</note>
    </ligand>
</feature>
<feature type="binding site" evidence="8 27">
    <location>
        <position position="453"/>
    </location>
    <ligand>
        <name>dATP</name>
        <dbReference type="ChEBI" id="CHEBI:61404"/>
        <note>allosteric activator</note>
    </ligand>
</feature>
<feature type="binding site" evidence="8 28">
    <location>
        <position position="453"/>
    </location>
    <ligand>
        <name>P(1),P(4)-bis(5'-adenosyl) tetraphosphate</name>
        <dbReference type="ChEBI" id="CHEBI:58141"/>
        <note>allosteric activator</note>
    </ligand>
</feature>
<feature type="binding site" evidence="8 25 29 30">
    <location>
        <position position="456"/>
    </location>
    <ligand>
        <name>ATP</name>
        <dbReference type="ChEBI" id="CHEBI:30616"/>
        <note>allosteric activator</note>
    </ligand>
</feature>
<feature type="binding site" evidence="8 27">
    <location>
        <position position="456"/>
    </location>
    <ligand>
        <name>dATP</name>
        <dbReference type="ChEBI" id="CHEBI:61404"/>
        <note>allosteric activator</note>
    </ligand>
</feature>
<feature type="binding site" evidence="8 24 31">
    <location>
        <position position="457"/>
    </location>
    <ligand>
        <name>(2R)-2,3-bisphosphoglycerate</name>
        <dbReference type="ChEBI" id="CHEBI:58248"/>
        <note>allosteric activator</note>
    </ligand>
</feature>
<feature type="binding site" evidence="8 28">
    <location>
        <position position="457"/>
    </location>
    <ligand>
        <name>P(1),P(4)-bis(5'-adenosyl) tetraphosphate</name>
        <dbReference type="ChEBI" id="CHEBI:58141"/>
        <note>allosteric activator</note>
    </ligand>
</feature>
<feature type="modified residue" description="Phosphoserine" evidence="33">
    <location>
        <position position="418"/>
    </location>
</feature>
<feature type="modified residue" description="Phosphoserine" evidence="32">
    <location>
        <position position="502"/>
    </location>
</feature>
<feature type="modified residue" description="Phosphoserine" evidence="33">
    <location>
        <position position="511"/>
    </location>
</feature>
<feature type="modified residue" description="Phosphoserine" evidence="2">
    <location>
        <position position="527"/>
    </location>
</feature>
<feature type="splice variant" id="VSP_054235" description="In isoform 2." evidence="13">
    <original>MSTSWSDRLQNAADMPANMDKHALKKYRREAYHR</original>
    <variation>MSKEG</variation>
    <location>
        <begin position="1"/>
        <end position="34"/>
    </location>
</feature>
<feature type="sequence variant" id="VAR_024244" description="In dbSNP:rs10883841." evidence="12">
    <original>T</original>
    <variation>A</variation>
    <location>
        <position position="3"/>
    </location>
</feature>
<feature type="sequence variant" id="VAR_030242" description="In dbSNP:rs12262171.">
    <original>Q</original>
    <variation>R</variation>
    <location>
        <position position="136"/>
    </location>
</feature>
<feature type="sequence variant" id="VAR_079707" description="In SPG45; uncertain significance." evidence="10">
    <original>L</original>
    <variation>P</variation>
    <location>
        <position position="460"/>
    </location>
</feature>
<feature type="mutagenesis site" description="Loss of 5' nucleotidase activity." evidence="8">
    <original>D</original>
    <variation>N</variation>
    <location>
        <position position="52"/>
    </location>
</feature>
<feature type="helix" evidence="34">
    <location>
        <begin position="5"/>
        <end position="13"/>
    </location>
</feature>
<feature type="helix" evidence="34">
    <location>
        <begin position="21"/>
        <end position="28"/>
    </location>
</feature>
<feature type="helix" evidence="34">
    <location>
        <begin position="31"/>
        <end position="33"/>
    </location>
</feature>
<feature type="strand" evidence="34">
    <location>
        <begin position="36"/>
        <end position="39"/>
    </location>
</feature>
<feature type="helix" evidence="34">
    <location>
        <begin position="43"/>
        <end position="45"/>
    </location>
</feature>
<feature type="strand" evidence="34">
    <location>
        <begin position="48"/>
        <end position="51"/>
    </location>
</feature>
<feature type="turn" evidence="34">
    <location>
        <begin position="55"/>
        <end position="57"/>
    </location>
</feature>
<feature type="strand" evidence="40">
    <location>
        <begin position="58"/>
        <end position="60"/>
    </location>
</feature>
<feature type="helix" evidence="34">
    <location>
        <begin position="64"/>
        <end position="79"/>
    </location>
</feature>
<feature type="helix" evidence="34">
    <location>
        <begin position="84"/>
        <end position="88"/>
    </location>
</feature>
<feature type="strand" evidence="34">
    <location>
        <begin position="101"/>
        <end position="103"/>
    </location>
</feature>
<feature type="turn" evidence="34">
    <location>
        <begin position="104"/>
        <end position="107"/>
    </location>
</feature>
<feature type="strand" evidence="34">
    <location>
        <begin position="108"/>
        <end position="112"/>
    </location>
</feature>
<feature type="strand" evidence="34">
    <location>
        <begin position="117"/>
        <end position="123"/>
    </location>
</feature>
<feature type="strand" evidence="35">
    <location>
        <begin position="126"/>
        <end position="128"/>
    </location>
</feature>
<feature type="helix" evidence="34">
    <location>
        <begin position="130"/>
        <end position="136"/>
    </location>
</feature>
<feature type="helix" evidence="38">
    <location>
        <begin position="138"/>
        <end position="140"/>
    </location>
</feature>
<feature type="turn" evidence="34">
    <location>
        <begin position="147"/>
        <end position="149"/>
    </location>
</feature>
<feature type="strand" evidence="34">
    <location>
        <begin position="150"/>
        <end position="152"/>
    </location>
</feature>
<feature type="helix" evidence="34">
    <location>
        <begin position="156"/>
        <end position="158"/>
    </location>
</feature>
<feature type="helix" evidence="34">
    <location>
        <begin position="159"/>
        <end position="174"/>
    </location>
</feature>
<feature type="strand" evidence="34">
    <location>
        <begin position="178"/>
        <end position="181"/>
    </location>
</feature>
<feature type="strand" evidence="34">
    <location>
        <begin position="184"/>
        <end position="187"/>
    </location>
</feature>
<feature type="strand" evidence="34">
    <location>
        <begin position="190"/>
        <end position="193"/>
    </location>
</feature>
<feature type="helix" evidence="34">
    <location>
        <begin position="194"/>
        <end position="210"/>
    </location>
</feature>
<feature type="helix" evidence="34">
    <location>
        <begin position="214"/>
        <end position="220"/>
    </location>
</feature>
<feature type="helix" evidence="34">
    <location>
        <begin position="222"/>
        <end position="225"/>
    </location>
</feature>
<feature type="helix" evidence="34">
    <location>
        <begin position="231"/>
        <end position="242"/>
    </location>
</feature>
<feature type="strand" evidence="34">
    <location>
        <begin position="243"/>
        <end position="248"/>
    </location>
</feature>
<feature type="helix" evidence="34">
    <location>
        <begin position="253"/>
        <end position="263"/>
    </location>
</feature>
<feature type="strand" evidence="34">
    <location>
        <begin position="266"/>
        <end position="271"/>
    </location>
</feature>
<feature type="helix" evidence="34">
    <location>
        <begin position="279"/>
        <end position="282"/>
    </location>
</feature>
<feature type="strand" evidence="34">
    <location>
        <begin position="284"/>
        <end position="289"/>
    </location>
</feature>
<feature type="helix" evidence="34">
    <location>
        <begin position="294"/>
        <end position="296"/>
    </location>
</feature>
<feature type="strand" evidence="34">
    <location>
        <begin position="302"/>
        <end position="306"/>
    </location>
</feature>
<feature type="turn" evidence="34">
    <location>
        <begin position="307"/>
        <end position="310"/>
    </location>
</feature>
<feature type="strand" evidence="39">
    <location>
        <begin position="312"/>
        <end position="315"/>
    </location>
</feature>
<feature type="helix" evidence="39">
    <location>
        <begin position="320"/>
        <end position="323"/>
    </location>
</feature>
<feature type="strand" evidence="34">
    <location>
        <begin position="327"/>
        <end position="329"/>
    </location>
</feature>
<feature type="helix" evidence="34">
    <location>
        <begin position="332"/>
        <end position="339"/>
    </location>
</feature>
<feature type="helix" evidence="34">
    <location>
        <begin position="343"/>
        <end position="345"/>
    </location>
</feature>
<feature type="strand" evidence="34">
    <location>
        <begin position="346"/>
        <end position="351"/>
    </location>
</feature>
<feature type="helix" evidence="34">
    <location>
        <begin position="353"/>
        <end position="357"/>
    </location>
</feature>
<feature type="helix" evidence="34">
    <location>
        <begin position="358"/>
        <end position="364"/>
    </location>
</feature>
<feature type="strand" evidence="34">
    <location>
        <begin position="367"/>
        <end position="371"/>
    </location>
</feature>
<feature type="helix" evidence="34">
    <location>
        <begin position="375"/>
        <end position="384"/>
    </location>
</feature>
<feature type="helix" evidence="34">
    <location>
        <begin position="386"/>
        <end position="398"/>
    </location>
</feature>
<feature type="turn" evidence="38">
    <location>
        <begin position="403"/>
        <end position="405"/>
    </location>
</feature>
<feature type="turn" evidence="37">
    <location>
        <begin position="417"/>
        <end position="420"/>
    </location>
</feature>
<feature type="helix" evidence="34">
    <location>
        <begin position="421"/>
        <end position="432"/>
    </location>
</feature>
<feature type="strand" evidence="34">
    <location>
        <begin position="440"/>
        <end position="443"/>
    </location>
</feature>
<feature type="strand" evidence="36">
    <location>
        <begin position="446"/>
        <end position="448"/>
    </location>
</feature>
<feature type="helix" evidence="34">
    <location>
        <begin position="449"/>
        <end position="457"/>
    </location>
</feature>
<feature type="strand" evidence="34">
    <location>
        <begin position="459"/>
        <end position="463"/>
    </location>
</feature>
<feature type="helix" evidence="34">
    <location>
        <begin position="465"/>
        <end position="470"/>
    </location>
</feature>
<feature type="helix" evidence="34">
    <location>
        <begin position="485"/>
        <end position="487"/>
    </location>
</feature>
<feature type="helix" evidence="38">
    <location>
        <begin position="503"/>
        <end position="506"/>
    </location>
</feature>
<feature type="turn" evidence="39">
    <location>
        <begin position="548"/>
        <end position="550"/>
    </location>
</feature>
<name>5NTC_HUMAN</name>
<proteinExistence type="evidence at protein level"/>
<dbReference type="EC" id="3.1.3.5" evidence="4 5 6 11"/>
<dbReference type="EC" id="3.1.3.99" evidence="4 5 6 11"/>
<dbReference type="EC" id="2.7.1.77" evidence="6 11"/>
<dbReference type="EMBL" id="D38524">
    <property type="protein sequence ID" value="BAA07529.1"/>
    <property type="molecule type" value="mRNA"/>
</dbReference>
<dbReference type="EMBL" id="AK295593">
    <property type="protein sequence ID" value="BAH12118.1"/>
    <property type="molecule type" value="mRNA"/>
</dbReference>
<dbReference type="EMBL" id="AL139817">
    <property type="status" value="NOT_ANNOTATED_CDS"/>
    <property type="molecule type" value="Genomic_DNA"/>
</dbReference>
<dbReference type="EMBL" id="AL360001">
    <property type="status" value="NOT_ANNOTATED_CDS"/>
    <property type="molecule type" value="Genomic_DNA"/>
</dbReference>
<dbReference type="EMBL" id="CH471066">
    <property type="protein sequence ID" value="EAW49656.1"/>
    <property type="molecule type" value="Genomic_DNA"/>
</dbReference>
<dbReference type="EMBL" id="CH471066">
    <property type="protein sequence ID" value="EAW49657.1"/>
    <property type="molecule type" value="Genomic_DNA"/>
</dbReference>
<dbReference type="EMBL" id="BC001595">
    <property type="protein sequence ID" value="AAH01595.1"/>
    <property type="molecule type" value="mRNA"/>
</dbReference>
<dbReference type="CCDS" id="CCDS7544.1">
    <molecule id="P49902-1"/>
</dbReference>
<dbReference type="CCDS" id="CCDS91339.1">
    <molecule id="P49902-2"/>
</dbReference>
<dbReference type="PIR" id="JC2436">
    <property type="entry name" value="JC2436"/>
</dbReference>
<dbReference type="RefSeq" id="NP_001127845.1">
    <molecule id="P49902-1"/>
    <property type="nucleotide sequence ID" value="NM_001134373.3"/>
</dbReference>
<dbReference type="RefSeq" id="NP_001338098.1">
    <molecule id="P49902-1"/>
    <property type="nucleotide sequence ID" value="NM_001351169.2"/>
</dbReference>
<dbReference type="RefSeq" id="NP_001338103.1">
    <molecule id="P49902-2"/>
    <property type="nucleotide sequence ID" value="NM_001351174.1"/>
</dbReference>
<dbReference type="RefSeq" id="NP_036361.1">
    <molecule id="P49902-1"/>
    <property type="nucleotide sequence ID" value="NM_012229.5"/>
</dbReference>
<dbReference type="RefSeq" id="XP_005269693.1">
    <property type="nucleotide sequence ID" value="XM_005269636.4"/>
</dbReference>
<dbReference type="RefSeq" id="XP_005269696.1">
    <property type="nucleotide sequence ID" value="XM_005269639.4"/>
</dbReference>
<dbReference type="RefSeq" id="XP_024303670.1">
    <molecule id="P49902-1"/>
    <property type="nucleotide sequence ID" value="XM_024447902.2"/>
</dbReference>
<dbReference type="RefSeq" id="XP_047280803.1">
    <molecule id="P49902-1"/>
    <property type="nucleotide sequence ID" value="XM_047424847.1"/>
</dbReference>
<dbReference type="RefSeq" id="XP_047280804.1">
    <molecule id="P49902-1"/>
    <property type="nucleotide sequence ID" value="XM_047424848.1"/>
</dbReference>
<dbReference type="RefSeq" id="XP_047280805.1">
    <molecule id="P49902-1"/>
    <property type="nucleotide sequence ID" value="XM_047424849.1"/>
</dbReference>
<dbReference type="RefSeq" id="XP_047280806.1">
    <molecule id="P49902-1"/>
    <property type="nucleotide sequence ID" value="XM_047424850.1"/>
</dbReference>
<dbReference type="RefSeq" id="XP_054221217.1">
    <molecule id="P49902-1"/>
    <property type="nucleotide sequence ID" value="XM_054365242.1"/>
</dbReference>
<dbReference type="RefSeq" id="XP_054221218.1">
    <molecule id="P49902-1"/>
    <property type="nucleotide sequence ID" value="XM_054365243.1"/>
</dbReference>
<dbReference type="RefSeq" id="XP_054221219.1">
    <molecule id="P49902-1"/>
    <property type="nucleotide sequence ID" value="XM_054365244.1"/>
</dbReference>
<dbReference type="RefSeq" id="XP_054221220.1">
    <molecule id="P49902-1"/>
    <property type="nucleotide sequence ID" value="XM_054365245.1"/>
</dbReference>
<dbReference type="RefSeq" id="XP_054221221.1">
    <molecule id="P49902-1"/>
    <property type="nucleotide sequence ID" value="XM_054365246.1"/>
</dbReference>
<dbReference type="PDB" id="2J2C">
    <property type="method" value="X-ray"/>
    <property type="resolution" value="2.20 A"/>
    <property type="chains" value="A=1-536"/>
</dbReference>
<dbReference type="PDB" id="2JC9">
    <property type="method" value="X-ray"/>
    <property type="resolution" value="1.50 A"/>
    <property type="chains" value="A=1-536"/>
</dbReference>
<dbReference type="PDB" id="2JCM">
    <property type="method" value="X-ray"/>
    <property type="resolution" value="2.15 A"/>
    <property type="chains" value="A=1-536"/>
</dbReference>
<dbReference type="PDB" id="2XCV">
    <property type="method" value="X-ray"/>
    <property type="resolution" value="2.30 A"/>
    <property type="chains" value="A=1-536"/>
</dbReference>
<dbReference type="PDB" id="2XCW">
    <property type="method" value="X-ray"/>
    <property type="resolution" value="1.90 A"/>
    <property type="chains" value="A=1-536"/>
</dbReference>
<dbReference type="PDB" id="2XCX">
    <property type="method" value="X-ray"/>
    <property type="resolution" value="2.30 A"/>
    <property type="chains" value="A=1-536"/>
</dbReference>
<dbReference type="PDB" id="2XJB">
    <property type="method" value="X-ray"/>
    <property type="resolution" value="2.30 A"/>
    <property type="chains" value="A=1-536"/>
</dbReference>
<dbReference type="PDB" id="2XJC">
    <property type="method" value="X-ray"/>
    <property type="resolution" value="2.00 A"/>
    <property type="chains" value="A=1-536"/>
</dbReference>
<dbReference type="PDB" id="2XJD">
    <property type="method" value="X-ray"/>
    <property type="resolution" value="2.00 A"/>
    <property type="chains" value="A=1-536"/>
</dbReference>
<dbReference type="PDB" id="2XJE">
    <property type="method" value="X-ray"/>
    <property type="resolution" value="2.30 A"/>
    <property type="chains" value="A=1-536"/>
</dbReference>
<dbReference type="PDB" id="2XJF">
    <property type="method" value="X-ray"/>
    <property type="resolution" value="2.10 A"/>
    <property type="chains" value="A=1-536"/>
</dbReference>
<dbReference type="PDB" id="4H4B">
    <property type="method" value="X-ray"/>
    <property type="resolution" value="2.90 A"/>
    <property type="chains" value="A=1-536"/>
</dbReference>
<dbReference type="PDB" id="5CQZ">
    <property type="method" value="X-ray"/>
    <property type="resolution" value="2.90 A"/>
    <property type="chains" value="A/B=1-536"/>
</dbReference>
<dbReference type="PDB" id="5CR7">
    <property type="method" value="X-ray"/>
    <property type="resolution" value="2.90 A"/>
    <property type="chains" value="A/B=1-536"/>
</dbReference>
<dbReference type="PDB" id="5K7Y">
    <property type="method" value="X-ray"/>
    <property type="resolution" value="1.79 A"/>
    <property type="chains" value="A=1-536"/>
</dbReference>
<dbReference type="PDB" id="5L4Z">
    <property type="method" value="X-ray"/>
    <property type="resolution" value="1.84 A"/>
    <property type="chains" value="A=1-536"/>
</dbReference>
<dbReference type="PDB" id="5L50">
    <property type="method" value="X-ray"/>
    <property type="resolution" value="1.64 A"/>
    <property type="chains" value="A=1-536"/>
</dbReference>
<dbReference type="PDB" id="5OPK">
    <property type="method" value="X-ray"/>
    <property type="resolution" value="1.74 A"/>
    <property type="chains" value="A=3-488"/>
</dbReference>
<dbReference type="PDB" id="5OPL">
    <property type="method" value="X-ray"/>
    <property type="resolution" value="1.80 A"/>
    <property type="chains" value="A=1-536"/>
</dbReference>
<dbReference type="PDB" id="5OPM">
    <property type="method" value="X-ray"/>
    <property type="resolution" value="1.68 A"/>
    <property type="chains" value="A=3-488"/>
</dbReference>
<dbReference type="PDB" id="5OPN">
    <property type="method" value="X-ray"/>
    <property type="resolution" value="1.77 A"/>
    <property type="chains" value="A=3-488"/>
</dbReference>
<dbReference type="PDB" id="5OPO">
    <property type="method" value="X-ray"/>
    <property type="resolution" value="2.00 A"/>
    <property type="chains" value="A=3-488"/>
</dbReference>
<dbReference type="PDB" id="5OPP">
    <property type="method" value="X-ray"/>
    <property type="resolution" value="1.70 A"/>
    <property type="chains" value="A=3-488"/>
</dbReference>
<dbReference type="PDB" id="6DD3">
    <property type="method" value="X-ray"/>
    <property type="resolution" value="1.98 A"/>
    <property type="chains" value="A=1-536"/>
</dbReference>
<dbReference type="PDB" id="6DDB">
    <property type="method" value="X-ray"/>
    <property type="resolution" value="2.80 A"/>
    <property type="chains" value="A/B=1-536"/>
</dbReference>
<dbReference type="PDB" id="6DDC">
    <property type="method" value="X-ray"/>
    <property type="resolution" value="2.91 A"/>
    <property type="chains" value="A/B=1-536"/>
</dbReference>
<dbReference type="PDB" id="6DDH">
    <property type="method" value="X-ray"/>
    <property type="resolution" value="2.35 A"/>
    <property type="chains" value="A=1-536"/>
</dbReference>
<dbReference type="PDB" id="6DDK">
    <property type="method" value="X-ray"/>
    <property type="resolution" value="2.50 A"/>
    <property type="chains" value="A/B=1-561"/>
</dbReference>
<dbReference type="PDB" id="6DDL">
    <property type="method" value="X-ray"/>
    <property type="resolution" value="2.26 A"/>
    <property type="chains" value="A/B=1-523"/>
</dbReference>
<dbReference type="PDB" id="6DDO">
    <property type="method" value="X-ray"/>
    <property type="resolution" value="2.48 A"/>
    <property type="chains" value="A/B=1-561"/>
</dbReference>
<dbReference type="PDB" id="6DDQ">
    <property type="method" value="X-ray"/>
    <property type="resolution" value="2.31 A"/>
    <property type="chains" value="A/B=1-561"/>
</dbReference>
<dbReference type="PDB" id="6DDX">
    <property type="method" value="X-ray"/>
    <property type="resolution" value="2.90 A"/>
    <property type="chains" value="A=1-536"/>
</dbReference>
<dbReference type="PDB" id="6DDY">
    <property type="method" value="X-ray"/>
    <property type="resolution" value="1.80 A"/>
    <property type="chains" value="A=1-536"/>
</dbReference>
<dbReference type="PDB" id="6DDZ">
    <property type="method" value="X-ray"/>
    <property type="resolution" value="1.97 A"/>
    <property type="chains" value="A=1-536"/>
</dbReference>
<dbReference type="PDB" id="6DE0">
    <property type="method" value="X-ray"/>
    <property type="resolution" value="2.05 A"/>
    <property type="chains" value="A=1-523"/>
</dbReference>
<dbReference type="PDB" id="6DE1">
    <property type="method" value="X-ray"/>
    <property type="resolution" value="2.15 A"/>
    <property type="chains" value="A=1-561"/>
</dbReference>
<dbReference type="PDB" id="6DE2">
    <property type="method" value="X-ray"/>
    <property type="resolution" value="2.10 A"/>
    <property type="chains" value="A=1-561"/>
</dbReference>
<dbReference type="PDB" id="6DE3">
    <property type="method" value="X-ray"/>
    <property type="resolution" value="3.06 A"/>
    <property type="chains" value="A=1-561"/>
</dbReference>
<dbReference type="PDB" id="6FIR">
    <property type="method" value="X-ray"/>
    <property type="resolution" value="2.50 A"/>
    <property type="chains" value="A=1-536"/>
</dbReference>
<dbReference type="PDB" id="6FIS">
    <property type="method" value="X-ray"/>
    <property type="resolution" value="2.30 A"/>
    <property type="chains" value="A=1-536"/>
</dbReference>
<dbReference type="PDB" id="6FIU">
    <property type="method" value="X-ray"/>
    <property type="resolution" value="2.50 A"/>
    <property type="chains" value="A=1-536"/>
</dbReference>
<dbReference type="PDB" id="6FIW">
    <property type="method" value="X-ray"/>
    <property type="resolution" value="2.20 A"/>
    <property type="chains" value="A=1-536"/>
</dbReference>
<dbReference type="PDB" id="6FXH">
    <property type="method" value="X-ray"/>
    <property type="resolution" value="2.30 A"/>
    <property type="chains" value="A=1-561"/>
</dbReference>
<dbReference type="PDBsum" id="2J2C"/>
<dbReference type="PDBsum" id="2JC9"/>
<dbReference type="PDBsum" id="2JCM"/>
<dbReference type="PDBsum" id="2XCV"/>
<dbReference type="PDBsum" id="2XCW"/>
<dbReference type="PDBsum" id="2XCX"/>
<dbReference type="PDBsum" id="2XJB"/>
<dbReference type="PDBsum" id="2XJC"/>
<dbReference type="PDBsum" id="2XJD"/>
<dbReference type="PDBsum" id="2XJE"/>
<dbReference type="PDBsum" id="2XJF"/>
<dbReference type="PDBsum" id="4H4B"/>
<dbReference type="PDBsum" id="5CQZ"/>
<dbReference type="PDBsum" id="5CR7"/>
<dbReference type="PDBsum" id="5K7Y"/>
<dbReference type="PDBsum" id="5L4Z"/>
<dbReference type="PDBsum" id="5L50"/>
<dbReference type="PDBsum" id="5OPK"/>
<dbReference type="PDBsum" id="5OPL"/>
<dbReference type="PDBsum" id="5OPM"/>
<dbReference type="PDBsum" id="5OPN"/>
<dbReference type="PDBsum" id="5OPO"/>
<dbReference type="PDBsum" id="5OPP"/>
<dbReference type="PDBsum" id="6DD3"/>
<dbReference type="PDBsum" id="6DDB"/>
<dbReference type="PDBsum" id="6DDC"/>
<dbReference type="PDBsum" id="6DDH"/>
<dbReference type="PDBsum" id="6DDK"/>
<dbReference type="PDBsum" id="6DDL"/>
<dbReference type="PDBsum" id="6DDO"/>
<dbReference type="PDBsum" id="6DDQ"/>
<dbReference type="PDBsum" id="6DDX"/>
<dbReference type="PDBsum" id="6DDY"/>
<dbReference type="PDBsum" id="6DDZ"/>
<dbReference type="PDBsum" id="6DE0"/>
<dbReference type="PDBsum" id="6DE1"/>
<dbReference type="PDBsum" id="6DE2"/>
<dbReference type="PDBsum" id="6DE3"/>
<dbReference type="PDBsum" id="6FIR"/>
<dbReference type="PDBsum" id="6FIS"/>
<dbReference type="PDBsum" id="6FIU"/>
<dbReference type="PDBsum" id="6FIW"/>
<dbReference type="PDBsum" id="6FXH"/>
<dbReference type="SMR" id="P49902"/>
<dbReference type="BioGRID" id="116627">
    <property type="interactions" value="142"/>
</dbReference>
<dbReference type="FunCoup" id="P49902">
    <property type="interactions" value="1357"/>
</dbReference>
<dbReference type="IntAct" id="P49902">
    <property type="interactions" value="33"/>
</dbReference>
<dbReference type="MINT" id="P49902"/>
<dbReference type="STRING" id="9606.ENSP00000339479"/>
<dbReference type="BindingDB" id="P49902"/>
<dbReference type="ChEMBL" id="CHEMBL3708197"/>
<dbReference type="DrugBank" id="DB00171">
    <property type="generic name" value="ATP"/>
</dbReference>
<dbReference type="DrugBank" id="DB00811">
    <property type="generic name" value="Ribavirin"/>
</dbReference>
<dbReference type="DrugBank" id="DB06408">
    <property type="generic name" value="Taribavirin"/>
</dbReference>
<dbReference type="DrugCentral" id="P49902"/>
<dbReference type="DEPOD" id="NT5C2"/>
<dbReference type="GlyGen" id="P49902">
    <property type="glycosylation" value="1 site, 1 O-linked glycan (1 site)"/>
</dbReference>
<dbReference type="iPTMnet" id="P49902"/>
<dbReference type="MetOSite" id="P49902"/>
<dbReference type="PhosphoSitePlus" id="P49902"/>
<dbReference type="BioMuta" id="NT5C2"/>
<dbReference type="DMDM" id="1703012"/>
<dbReference type="jPOST" id="P49902"/>
<dbReference type="MassIVE" id="P49902"/>
<dbReference type="PaxDb" id="9606-ENSP00000339479"/>
<dbReference type="PeptideAtlas" id="P49902"/>
<dbReference type="ProteomicsDB" id="56174">
    <molecule id="P49902-1"/>
</dbReference>
<dbReference type="ProteomicsDB" id="6498"/>
<dbReference type="Pumba" id="P49902"/>
<dbReference type="TopDownProteomics" id="P49902-1">
    <molecule id="P49902-1"/>
</dbReference>
<dbReference type="Antibodypedia" id="18107">
    <property type="antibodies" value="243 antibodies from 32 providers"/>
</dbReference>
<dbReference type="DNASU" id="22978"/>
<dbReference type="Ensembl" id="ENST00000343289.9">
    <molecule id="P49902-1"/>
    <property type="protein sequence ID" value="ENSP00000339479.5"/>
    <property type="gene ID" value="ENSG00000076685.19"/>
</dbReference>
<dbReference type="Ensembl" id="ENST00000404739.8">
    <molecule id="P49902-1"/>
    <property type="protein sequence ID" value="ENSP00000383960.3"/>
    <property type="gene ID" value="ENSG00000076685.19"/>
</dbReference>
<dbReference type="Ensembl" id="ENST00000674696.1">
    <molecule id="P49902-1"/>
    <property type="protein sequence ID" value="ENSP00000502679.1"/>
    <property type="gene ID" value="ENSG00000076685.19"/>
</dbReference>
<dbReference type="Ensembl" id="ENST00000675326.1">
    <molecule id="P49902-1"/>
    <property type="protein sequence ID" value="ENSP00000502205.1"/>
    <property type="gene ID" value="ENSG00000076685.19"/>
</dbReference>
<dbReference type="Ensembl" id="ENST00000675985.1">
    <molecule id="P49902-2"/>
    <property type="protein sequence ID" value="ENSP00000502215.1"/>
    <property type="gene ID" value="ENSG00000076685.19"/>
</dbReference>
<dbReference type="Ensembl" id="ENST00000676428.1">
    <molecule id="P49902-1"/>
    <property type="protein sequence ID" value="ENSP00000501689.1"/>
    <property type="gene ID" value="ENSG00000076685.19"/>
</dbReference>
<dbReference type="Ensembl" id="ENST00000676449.1">
    <molecule id="P49902-1"/>
    <property type="protein sequence ID" value="ENSP00000502801.1"/>
    <property type="gene ID" value="ENSG00000076685.19"/>
</dbReference>
<dbReference type="GeneID" id="22978"/>
<dbReference type="KEGG" id="hsa:22978"/>
<dbReference type="MANE-Select" id="ENST00000404739.8">
    <property type="protein sequence ID" value="ENSP00000383960.3"/>
    <property type="RefSeq nucleotide sequence ID" value="NM_001351169.2"/>
    <property type="RefSeq protein sequence ID" value="NP_001338098.1"/>
</dbReference>
<dbReference type="UCSC" id="uc001kwq.4">
    <molecule id="P49902-1"/>
    <property type="organism name" value="human"/>
</dbReference>
<dbReference type="AGR" id="HGNC:8022"/>
<dbReference type="CTD" id="22978"/>
<dbReference type="DisGeNET" id="22978"/>
<dbReference type="GeneCards" id="NT5C2"/>
<dbReference type="HGNC" id="HGNC:8022">
    <property type="gene designation" value="NT5C2"/>
</dbReference>
<dbReference type="HPA" id="ENSG00000076685">
    <property type="expression patterns" value="Low tissue specificity"/>
</dbReference>
<dbReference type="MalaCards" id="NT5C2"/>
<dbReference type="MIM" id="600417">
    <property type="type" value="gene"/>
</dbReference>
<dbReference type="MIM" id="613162">
    <property type="type" value="phenotype"/>
</dbReference>
<dbReference type="neXtProt" id="NX_P49902"/>
<dbReference type="OpenTargets" id="ENSG00000076685"/>
<dbReference type="Orphanet" id="320396">
    <property type="disease" value="Autosomal recessive spastic paraplegia type 45"/>
</dbReference>
<dbReference type="PharmGKB" id="PA31801"/>
<dbReference type="VEuPathDB" id="HostDB:ENSG00000076685"/>
<dbReference type="eggNOG" id="KOG2469">
    <property type="taxonomic scope" value="Eukaryota"/>
</dbReference>
<dbReference type="GeneTree" id="ENSGT00940000162369"/>
<dbReference type="HOGENOM" id="CLU_017845_3_0_1"/>
<dbReference type="InParanoid" id="P49902"/>
<dbReference type="OrthoDB" id="10252832at2759"/>
<dbReference type="PAN-GO" id="P49902">
    <property type="GO annotations" value="3 GO annotations based on evolutionary models"/>
</dbReference>
<dbReference type="PhylomeDB" id="P49902"/>
<dbReference type="TreeFam" id="TF315266"/>
<dbReference type="BioCyc" id="MetaCyc:HS01216-MONOMER"/>
<dbReference type="BRENDA" id="3.1.3.5">
    <property type="organism ID" value="2681"/>
</dbReference>
<dbReference type="PathwayCommons" id="P49902"/>
<dbReference type="Reactome" id="R-HSA-2161541">
    <property type="pathway name" value="Abacavir metabolism"/>
</dbReference>
<dbReference type="Reactome" id="R-HSA-74259">
    <property type="pathway name" value="Purine catabolism"/>
</dbReference>
<dbReference type="Reactome" id="R-HSA-9755088">
    <property type="pathway name" value="Ribavirin ADME"/>
</dbReference>
<dbReference type="SABIO-RK" id="P49902"/>
<dbReference type="SignaLink" id="P49902"/>
<dbReference type="BioGRID-ORCS" id="22978">
    <property type="hits" value="15 hits in 1177 CRISPR screens"/>
</dbReference>
<dbReference type="ChiTaRS" id="NT5C2">
    <property type="organism name" value="human"/>
</dbReference>
<dbReference type="EvolutionaryTrace" id="P49902"/>
<dbReference type="GenomeRNAi" id="22978"/>
<dbReference type="Pharos" id="P49902">
    <property type="development level" value="Tbio"/>
</dbReference>
<dbReference type="PRO" id="PR:P49902"/>
<dbReference type="Proteomes" id="UP000005640">
    <property type="component" value="Chromosome 10"/>
</dbReference>
<dbReference type="RNAct" id="P49902">
    <property type="molecule type" value="protein"/>
</dbReference>
<dbReference type="Bgee" id="ENSG00000076685">
    <property type="expression patterns" value="Expressed in parotid gland and 207 other cell types or tissues"/>
</dbReference>
<dbReference type="ExpressionAtlas" id="P49902">
    <property type="expression patterns" value="baseline and differential"/>
</dbReference>
<dbReference type="GO" id="GO:0005737">
    <property type="term" value="C:cytoplasm"/>
    <property type="evidence" value="ECO:0000314"/>
    <property type="project" value="UniProt"/>
</dbReference>
<dbReference type="GO" id="GO:0005829">
    <property type="term" value="C:cytosol"/>
    <property type="evidence" value="ECO:0000314"/>
    <property type="project" value="UniProtKB"/>
</dbReference>
<dbReference type="GO" id="GO:0008253">
    <property type="term" value="F:5'-nucleotidase activity"/>
    <property type="evidence" value="ECO:0000314"/>
    <property type="project" value="UniProtKB"/>
</dbReference>
<dbReference type="GO" id="GO:0005524">
    <property type="term" value="F:ATP binding"/>
    <property type="evidence" value="ECO:0000314"/>
    <property type="project" value="UniProtKB"/>
</dbReference>
<dbReference type="GO" id="GO:0050484">
    <property type="term" value="F:GMP 5'-nucleotidase activity"/>
    <property type="evidence" value="ECO:0000250"/>
    <property type="project" value="UniProtKB"/>
</dbReference>
<dbReference type="GO" id="GO:0042802">
    <property type="term" value="F:identical protein binding"/>
    <property type="evidence" value="ECO:0000314"/>
    <property type="project" value="UniProtKB"/>
</dbReference>
<dbReference type="GO" id="GO:0050483">
    <property type="term" value="F:IMP 5'-nucleotidase activity"/>
    <property type="evidence" value="ECO:0000314"/>
    <property type="project" value="UniProtKB"/>
</dbReference>
<dbReference type="GO" id="GO:0046872">
    <property type="term" value="F:metal ion binding"/>
    <property type="evidence" value="ECO:0007669"/>
    <property type="project" value="UniProtKB-KW"/>
</dbReference>
<dbReference type="GO" id="GO:0050146">
    <property type="term" value="F:nucleoside phosphotransferase activity"/>
    <property type="evidence" value="ECO:0000314"/>
    <property type="project" value="UniProtKB"/>
</dbReference>
<dbReference type="GO" id="GO:0061630">
    <property type="term" value="F:ubiquitin protein ligase activity"/>
    <property type="evidence" value="ECO:0000314"/>
    <property type="project" value="UniProt"/>
</dbReference>
<dbReference type="GO" id="GO:0106411">
    <property type="term" value="F:XMP 5'-nucleosidase activity"/>
    <property type="evidence" value="ECO:0007669"/>
    <property type="project" value="RHEA"/>
</dbReference>
<dbReference type="GO" id="GO:0046085">
    <property type="term" value="P:adenosine metabolic process"/>
    <property type="evidence" value="ECO:0000318"/>
    <property type="project" value="GO_Central"/>
</dbReference>
<dbReference type="GO" id="GO:0000255">
    <property type="term" value="P:allantoin metabolic process"/>
    <property type="evidence" value="ECO:0000314"/>
    <property type="project" value="MGI"/>
</dbReference>
<dbReference type="GO" id="GO:0043605">
    <property type="term" value="P:amide catabolic process"/>
    <property type="evidence" value="ECO:0007669"/>
    <property type="project" value="Ensembl"/>
</dbReference>
<dbReference type="GO" id="GO:0046055">
    <property type="term" value="P:dGMP catabolic process"/>
    <property type="evidence" value="ECO:0007669"/>
    <property type="project" value="Ensembl"/>
</dbReference>
<dbReference type="GO" id="GO:0046054">
    <property type="term" value="P:dGMP metabolic process"/>
    <property type="evidence" value="ECO:0000314"/>
    <property type="project" value="UniProtKB"/>
</dbReference>
<dbReference type="GO" id="GO:0006202">
    <property type="term" value="P:GMP catabolic process to guanine"/>
    <property type="evidence" value="ECO:0007669"/>
    <property type="project" value="Ensembl"/>
</dbReference>
<dbReference type="GO" id="GO:0046037">
    <property type="term" value="P:GMP metabolic process"/>
    <property type="evidence" value="ECO:0000314"/>
    <property type="project" value="UniProtKB"/>
</dbReference>
<dbReference type="GO" id="GO:0006204">
    <property type="term" value="P:IMP catabolic process"/>
    <property type="evidence" value="ECO:0000314"/>
    <property type="project" value="MGI"/>
</dbReference>
<dbReference type="GO" id="GO:0046040">
    <property type="term" value="P:IMP metabolic process"/>
    <property type="evidence" value="ECO:0000314"/>
    <property type="project" value="UniProtKB"/>
</dbReference>
<dbReference type="GO" id="GO:0050689">
    <property type="term" value="P:negative regulation of defense response to virus by host"/>
    <property type="evidence" value="ECO:0000314"/>
    <property type="project" value="UniProt"/>
</dbReference>
<dbReference type="GO" id="GO:0070936">
    <property type="term" value="P:protein K48-linked ubiquitination"/>
    <property type="evidence" value="ECO:0000314"/>
    <property type="project" value="UniProt"/>
</dbReference>
<dbReference type="CDD" id="cd07522">
    <property type="entry name" value="HAD_cN-II"/>
    <property type="match status" value="1"/>
</dbReference>
<dbReference type="FunFam" id="3.40.50.1000:FF:000021">
    <property type="entry name" value="NT5C2 isoform 1"/>
    <property type="match status" value="1"/>
</dbReference>
<dbReference type="Gene3D" id="3.40.50.1000">
    <property type="entry name" value="HAD superfamily/HAD-like"/>
    <property type="match status" value="2"/>
</dbReference>
<dbReference type="InterPro" id="IPR036412">
    <property type="entry name" value="HAD-like_sf"/>
</dbReference>
<dbReference type="InterPro" id="IPR008380">
    <property type="entry name" value="HAD-SF_hydro_IG_5-nucl"/>
</dbReference>
<dbReference type="InterPro" id="IPR023214">
    <property type="entry name" value="HAD_sf"/>
</dbReference>
<dbReference type="InterPro" id="IPR016695">
    <property type="entry name" value="Pur_nucleotidase"/>
</dbReference>
<dbReference type="NCBIfam" id="TIGR02244">
    <property type="entry name" value="HAD-IG-Ncltidse"/>
    <property type="match status" value="1"/>
</dbReference>
<dbReference type="PANTHER" id="PTHR12103">
    <property type="entry name" value="5'-NUCLEOTIDASE DOMAIN-CONTAINING"/>
    <property type="match status" value="1"/>
</dbReference>
<dbReference type="PANTHER" id="PTHR12103:SF17">
    <property type="entry name" value="CYTOSOLIC PURINE 5'-NUCLEOTIDASE"/>
    <property type="match status" value="1"/>
</dbReference>
<dbReference type="Pfam" id="PF05761">
    <property type="entry name" value="5_nucleotid"/>
    <property type="match status" value="1"/>
</dbReference>
<dbReference type="PIRSF" id="PIRSF017434">
    <property type="entry name" value="Purine_5'-nucleotidase"/>
    <property type="match status" value="1"/>
</dbReference>
<dbReference type="SUPFAM" id="SSF56784">
    <property type="entry name" value="HAD-like"/>
    <property type="match status" value="1"/>
</dbReference>
<sequence length="561" mass="64970">MSTSWSDRLQNAADMPANMDKHALKKYRREAYHRVFVNRSLAMEKIKCFGFDMDYTLAVYKSPEYESLGFELTVERLVSIGYPQELLSFAYDSTFPTRGLVFDTLYGNLLKVDAYGNLLVCAHGFNFIRGPETREQYPNKFIQRDDTERFYILNTLFNLPETYLLACLVDFFTNCPRYTSCETGFKDGDLFMSYRSMFQDVRDAVDWVHYKGSLKEKTVENLEKYVVKDGKLPLLLSRMKEVGKVFLATNSDYKYTDKIMTYLFDFPHGPKPGSSHRPWQSYFDLILVDARKPLFFGEGTVLRQVDTKTGKLKIGTYTGPLQHGIVYSGGSSDTICDLLGAKGKDILYIGDHIFGDILKSKKRQGWRTFLVIPELAQELHVWTDKSSLFEELQSLDIFLAELYKHLDSSSNERPDISSIQRRIKKVTHDMDMCYGMMGSLFRSGSRQTLFASQVMRYADLYAASFINLLYYPFSYLFRAAHVLMPHESTVEHTHVDINEMESPLATRNRTSVDFKDTDYKRHQLTRSISEIKPPNLFPLAPQEITHCHDEDDDEEEEEEEE</sequence>
<accession>P49902</accession>
<accession>B7Z382</accession>
<accession>D3DR91</accession>
<accession>Q5JUV5</accession>
<keyword id="KW-0002">3D-structure</keyword>
<keyword id="KW-0021">Allosteric enzyme</keyword>
<keyword id="KW-0025">Alternative splicing</keyword>
<keyword id="KW-0067">ATP-binding</keyword>
<keyword id="KW-0963">Cytoplasm</keyword>
<keyword id="KW-0225">Disease variant</keyword>
<keyword id="KW-0890">Hereditary spastic paraplegia</keyword>
<keyword id="KW-0378">Hydrolase</keyword>
<keyword id="KW-0460">Magnesium</keyword>
<keyword id="KW-0479">Metal-binding</keyword>
<keyword id="KW-0523">Neurodegeneration</keyword>
<keyword id="KW-0546">Nucleotide metabolism</keyword>
<keyword id="KW-0547">Nucleotide-binding</keyword>
<keyword id="KW-0597">Phosphoprotein</keyword>
<keyword id="KW-1267">Proteomics identification</keyword>
<keyword id="KW-1185">Reference proteome</keyword>
<keyword id="KW-0808">Transferase</keyword>
<reference key="1">
    <citation type="journal article" date="1994" name="Biochem. Biophys. Res. Commun.">
        <title>Molecular cloning of human cytosolic purine 5'-nucleotidase.</title>
        <authorList>
            <person name="Oka J."/>
            <person name="Matsumoto A."/>
            <person name="Hosokawa Y."/>
            <person name="Inoue S."/>
        </authorList>
    </citation>
    <scope>NUCLEOTIDE SEQUENCE [MRNA] (ISOFORM 1)</scope>
    <source>
        <tissue>Placenta</tissue>
    </source>
</reference>
<reference key="2">
    <citation type="journal article" date="2004" name="Nat. Genet.">
        <title>Complete sequencing and characterization of 21,243 full-length human cDNAs.</title>
        <authorList>
            <person name="Ota T."/>
            <person name="Suzuki Y."/>
            <person name="Nishikawa T."/>
            <person name="Otsuki T."/>
            <person name="Sugiyama T."/>
            <person name="Irie R."/>
            <person name="Wakamatsu A."/>
            <person name="Hayashi K."/>
            <person name="Sato H."/>
            <person name="Nagai K."/>
            <person name="Kimura K."/>
            <person name="Makita H."/>
            <person name="Sekine M."/>
            <person name="Obayashi M."/>
            <person name="Nishi T."/>
            <person name="Shibahara T."/>
            <person name="Tanaka T."/>
            <person name="Ishii S."/>
            <person name="Yamamoto J."/>
            <person name="Saito K."/>
            <person name="Kawai Y."/>
            <person name="Isono Y."/>
            <person name="Nakamura Y."/>
            <person name="Nagahari K."/>
            <person name="Murakami K."/>
            <person name="Yasuda T."/>
            <person name="Iwayanagi T."/>
            <person name="Wagatsuma M."/>
            <person name="Shiratori A."/>
            <person name="Sudo H."/>
            <person name="Hosoiri T."/>
            <person name="Kaku Y."/>
            <person name="Kodaira H."/>
            <person name="Kondo H."/>
            <person name="Sugawara M."/>
            <person name="Takahashi M."/>
            <person name="Kanda K."/>
            <person name="Yokoi T."/>
            <person name="Furuya T."/>
            <person name="Kikkawa E."/>
            <person name="Omura Y."/>
            <person name="Abe K."/>
            <person name="Kamihara K."/>
            <person name="Katsuta N."/>
            <person name="Sato K."/>
            <person name="Tanikawa M."/>
            <person name="Yamazaki M."/>
            <person name="Ninomiya K."/>
            <person name="Ishibashi T."/>
            <person name="Yamashita H."/>
            <person name="Murakawa K."/>
            <person name="Fujimori K."/>
            <person name="Tanai H."/>
            <person name="Kimata M."/>
            <person name="Watanabe M."/>
            <person name="Hiraoka S."/>
            <person name="Chiba Y."/>
            <person name="Ishida S."/>
            <person name="Ono Y."/>
            <person name="Takiguchi S."/>
            <person name="Watanabe S."/>
            <person name="Yosida M."/>
            <person name="Hotuta T."/>
            <person name="Kusano J."/>
            <person name="Kanehori K."/>
            <person name="Takahashi-Fujii A."/>
            <person name="Hara H."/>
            <person name="Tanase T.-O."/>
            <person name="Nomura Y."/>
            <person name="Togiya S."/>
            <person name="Komai F."/>
            <person name="Hara R."/>
            <person name="Takeuchi K."/>
            <person name="Arita M."/>
            <person name="Imose N."/>
            <person name="Musashino K."/>
            <person name="Yuuki H."/>
            <person name="Oshima A."/>
            <person name="Sasaki N."/>
            <person name="Aotsuka S."/>
            <person name="Yoshikawa Y."/>
            <person name="Matsunawa H."/>
            <person name="Ichihara T."/>
            <person name="Shiohata N."/>
            <person name="Sano S."/>
            <person name="Moriya S."/>
            <person name="Momiyama H."/>
            <person name="Satoh N."/>
            <person name="Takami S."/>
            <person name="Terashima Y."/>
            <person name="Suzuki O."/>
            <person name="Nakagawa S."/>
            <person name="Senoh A."/>
            <person name="Mizoguchi H."/>
            <person name="Goto Y."/>
            <person name="Shimizu F."/>
            <person name="Wakebe H."/>
            <person name="Hishigaki H."/>
            <person name="Watanabe T."/>
            <person name="Sugiyama A."/>
            <person name="Takemoto M."/>
            <person name="Kawakami B."/>
            <person name="Yamazaki M."/>
            <person name="Watanabe K."/>
            <person name="Kumagai A."/>
            <person name="Itakura S."/>
            <person name="Fukuzumi Y."/>
            <person name="Fujimori Y."/>
            <person name="Komiyama M."/>
            <person name="Tashiro H."/>
            <person name="Tanigami A."/>
            <person name="Fujiwara T."/>
            <person name="Ono T."/>
            <person name="Yamada K."/>
            <person name="Fujii Y."/>
            <person name="Ozaki K."/>
            <person name="Hirao M."/>
            <person name="Ohmori Y."/>
            <person name="Kawabata A."/>
            <person name="Hikiji T."/>
            <person name="Kobatake N."/>
            <person name="Inagaki H."/>
            <person name="Ikema Y."/>
            <person name="Okamoto S."/>
            <person name="Okitani R."/>
            <person name="Kawakami T."/>
            <person name="Noguchi S."/>
            <person name="Itoh T."/>
            <person name="Shigeta K."/>
            <person name="Senba T."/>
            <person name="Matsumura K."/>
            <person name="Nakajima Y."/>
            <person name="Mizuno T."/>
            <person name="Morinaga M."/>
            <person name="Sasaki M."/>
            <person name="Togashi T."/>
            <person name="Oyama M."/>
            <person name="Hata H."/>
            <person name="Watanabe M."/>
            <person name="Komatsu T."/>
            <person name="Mizushima-Sugano J."/>
            <person name="Satoh T."/>
            <person name="Shirai Y."/>
            <person name="Takahashi Y."/>
            <person name="Nakagawa K."/>
            <person name="Okumura K."/>
            <person name="Nagase T."/>
            <person name="Nomura N."/>
            <person name="Kikuchi H."/>
            <person name="Masuho Y."/>
            <person name="Yamashita R."/>
            <person name="Nakai K."/>
            <person name="Yada T."/>
            <person name="Nakamura Y."/>
            <person name="Ohara O."/>
            <person name="Isogai T."/>
            <person name="Sugano S."/>
        </authorList>
    </citation>
    <scope>NUCLEOTIDE SEQUENCE [LARGE SCALE MRNA] (ISOFORM 2)</scope>
    <source>
        <tissue>Hippocampus</tissue>
    </source>
</reference>
<reference key="3">
    <citation type="journal article" date="2004" name="Nature">
        <title>The DNA sequence and comparative analysis of human chromosome 10.</title>
        <authorList>
            <person name="Deloukas P."/>
            <person name="Earthrowl M.E."/>
            <person name="Grafham D.V."/>
            <person name="Rubenfield M."/>
            <person name="French L."/>
            <person name="Steward C.A."/>
            <person name="Sims S.K."/>
            <person name="Jones M.C."/>
            <person name="Searle S."/>
            <person name="Scott C."/>
            <person name="Howe K."/>
            <person name="Hunt S.E."/>
            <person name="Andrews T.D."/>
            <person name="Gilbert J.G.R."/>
            <person name="Swarbreck D."/>
            <person name="Ashurst J.L."/>
            <person name="Taylor A."/>
            <person name="Battles J."/>
            <person name="Bird C.P."/>
            <person name="Ainscough R."/>
            <person name="Almeida J.P."/>
            <person name="Ashwell R.I.S."/>
            <person name="Ambrose K.D."/>
            <person name="Babbage A.K."/>
            <person name="Bagguley C.L."/>
            <person name="Bailey J."/>
            <person name="Banerjee R."/>
            <person name="Bates K."/>
            <person name="Beasley H."/>
            <person name="Bray-Allen S."/>
            <person name="Brown A.J."/>
            <person name="Brown J.Y."/>
            <person name="Burford D.C."/>
            <person name="Burrill W."/>
            <person name="Burton J."/>
            <person name="Cahill P."/>
            <person name="Camire D."/>
            <person name="Carter N.P."/>
            <person name="Chapman J.C."/>
            <person name="Clark S.Y."/>
            <person name="Clarke G."/>
            <person name="Clee C.M."/>
            <person name="Clegg S."/>
            <person name="Corby N."/>
            <person name="Coulson A."/>
            <person name="Dhami P."/>
            <person name="Dutta I."/>
            <person name="Dunn M."/>
            <person name="Faulkner L."/>
            <person name="Frankish A."/>
            <person name="Frankland J.A."/>
            <person name="Garner P."/>
            <person name="Garnett J."/>
            <person name="Gribble S."/>
            <person name="Griffiths C."/>
            <person name="Grocock R."/>
            <person name="Gustafson E."/>
            <person name="Hammond S."/>
            <person name="Harley J.L."/>
            <person name="Hart E."/>
            <person name="Heath P.D."/>
            <person name="Ho T.P."/>
            <person name="Hopkins B."/>
            <person name="Horne J."/>
            <person name="Howden P.J."/>
            <person name="Huckle E."/>
            <person name="Hynds C."/>
            <person name="Johnson C."/>
            <person name="Johnson D."/>
            <person name="Kana A."/>
            <person name="Kay M."/>
            <person name="Kimberley A.M."/>
            <person name="Kershaw J.K."/>
            <person name="Kokkinaki M."/>
            <person name="Laird G.K."/>
            <person name="Lawlor S."/>
            <person name="Lee H.M."/>
            <person name="Leongamornlert D.A."/>
            <person name="Laird G."/>
            <person name="Lloyd C."/>
            <person name="Lloyd D.M."/>
            <person name="Loveland J."/>
            <person name="Lovell J."/>
            <person name="McLaren S."/>
            <person name="McLay K.E."/>
            <person name="McMurray A."/>
            <person name="Mashreghi-Mohammadi M."/>
            <person name="Matthews L."/>
            <person name="Milne S."/>
            <person name="Nickerson T."/>
            <person name="Nguyen M."/>
            <person name="Overton-Larty E."/>
            <person name="Palmer S.A."/>
            <person name="Pearce A.V."/>
            <person name="Peck A.I."/>
            <person name="Pelan S."/>
            <person name="Phillimore B."/>
            <person name="Porter K."/>
            <person name="Rice C.M."/>
            <person name="Rogosin A."/>
            <person name="Ross M.T."/>
            <person name="Sarafidou T."/>
            <person name="Sehra H.K."/>
            <person name="Shownkeen R."/>
            <person name="Skuce C.D."/>
            <person name="Smith M."/>
            <person name="Standring L."/>
            <person name="Sycamore N."/>
            <person name="Tester J."/>
            <person name="Thorpe A."/>
            <person name="Torcasso W."/>
            <person name="Tracey A."/>
            <person name="Tromans A."/>
            <person name="Tsolas J."/>
            <person name="Wall M."/>
            <person name="Walsh J."/>
            <person name="Wang H."/>
            <person name="Weinstock K."/>
            <person name="West A.P."/>
            <person name="Willey D.L."/>
            <person name="Whitehead S.L."/>
            <person name="Wilming L."/>
            <person name="Wray P.W."/>
            <person name="Young L."/>
            <person name="Chen Y."/>
            <person name="Lovering R.C."/>
            <person name="Moschonas N.K."/>
            <person name="Siebert R."/>
            <person name="Fechtel K."/>
            <person name="Bentley D."/>
            <person name="Durbin R.M."/>
            <person name="Hubbard T."/>
            <person name="Doucette-Stamm L."/>
            <person name="Beck S."/>
            <person name="Smith D.R."/>
            <person name="Rogers J."/>
        </authorList>
    </citation>
    <scope>NUCLEOTIDE SEQUENCE [LARGE SCALE GENOMIC DNA]</scope>
</reference>
<reference key="4">
    <citation type="submission" date="2005-09" db="EMBL/GenBank/DDBJ databases">
        <authorList>
            <person name="Mural R.J."/>
            <person name="Istrail S."/>
            <person name="Sutton G.G."/>
            <person name="Florea L."/>
            <person name="Halpern A.L."/>
            <person name="Mobarry C.M."/>
            <person name="Lippert R."/>
            <person name="Walenz B."/>
            <person name="Shatkay H."/>
            <person name="Dew I."/>
            <person name="Miller J.R."/>
            <person name="Flanigan M.J."/>
            <person name="Edwards N.J."/>
            <person name="Bolanos R."/>
            <person name="Fasulo D."/>
            <person name="Halldorsson B.V."/>
            <person name="Hannenhalli S."/>
            <person name="Turner R."/>
            <person name="Yooseph S."/>
            <person name="Lu F."/>
            <person name="Nusskern D.R."/>
            <person name="Shue B.C."/>
            <person name="Zheng X.H."/>
            <person name="Zhong F."/>
            <person name="Delcher A.L."/>
            <person name="Huson D.H."/>
            <person name="Kravitz S.A."/>
            <person name="Mouchard L."/>
            <person name="Reinert K."/>
            <person name="Remington K.A."/>
            <person name="Clark A.G."/>
            <person name="Waterman M.S."/>
            <person name="Eichler E.E."/>
            <person name="Adams M.D."/>
            <person name="Hunkapiller M.W."/>
            <person name="Myers E.W."/>
            <person name="Venter J.C."/>
        </authorList>
    </citation>
    <scope>NUCLEOTIDE SEQUENCE [LARGE SCALE GENOMIC DNA]</scope>
    <scope>VARIANT ALA-3</scope>
</reference>
<reference key="5">
    <citation type="journal article" date="2004" name="Genome Res.">
        <title>The status, quality, and expansion of the NIH full-length cDNA project: the Mammalian Gene Collection (MGC).</title>
        <authorList>
            <consortium name="The MGC Project Team"/>
        </authorList>
    </citation>
    <scope>NUCLEOTIDE SEQUENCE [LARGE SCALE MRNA] (ISOFORM 1)</scope>
    <source>
        <tissue>Lymph</tissue>
    </source>
</reference>
<reference key="6">
    <citation type="journal article" date="1991" name="Arch. Biochem. Biophys.">
        <title>Nucleoside phosphotransferase activity of human colon carcinoma cytosolic 5'-nucleotidase.</title>
        <authorList>
            <person name="Tozzi M.G."/>
            <person name="Camici M."/>
            <person name="Pesi R."/>
            <person name="Allegrini S."/>
            <person name="Sgarrella F."/>
            <person name="Ipata P.L."/>
        </authorList>
    </citation>
    <scope>IDENTIFICATION</scope>
    <scope>FUNCTION</scope>
    <scope>CATALYTIC ACTIVITY</scope>
    <scope>SUBSTRATE SPECIFICITY</scope>
    <scope>BIOPHYSICOCHEMICAL PROPERTIES</scope>
    <scope>ACTIVITY REGULATION</scope>
</reference>
<reference key="7">
    <citation type="journal article" date="1997" name="Biochem. J.">
        <title>Bovine cytosolic IMP/GMP-specific 5'-nucleotidase: cloning and expression of active enzyme in Escherichia coli.</title>
        <authorList>
            <person name="Allegrini S."/>
            <person name="Pesi R."/>
            <person name="Tozzi M.G."/>
            <person name="Fiol C.J."/>
            <person name="Johnson R.B."/>
            <person name="Eriksson S."/>
        </authorList>
    </citation>
    <scope>FUNCTION</scope>
    <scope>CATALYTIC ACTIVITY</scope>
    <scope>SUBSTRATE SPECIFICITY</scope>
    <scope>SUBCELLULAR LOCATION</scope>
    <scope>TISSUE SPECIFICITY</scope>
    <source>
        <tissue>Thymus</tissue>
    </source>
</reference>
<reference key="8">
    <citation type="journal article" date="1999" name="Eur. J. Biochem.">
        <title>ATP and phosphate reciprocally affect subunit association of human recombinant High Km 5'-nucleotidase. Role for the C-terminal polyglutamic acid tract in subunit association and catalytic activity.</title>
        <authorList>
            <person name="Spychala J."/>
            <person name="Chen V."/>
            <person name="Oka J."/>
            <person name="Mitchell B.S."/>
        </authorList>
    </citation>
    <scope>FUNCTION</scope>
    <scope>CATALYTIC ACTIVITY</scope>
    <scope>BIOPHYSICOCHEMICAL PROPERTIES</scope>
    <scope>ACTIVITY REGULATION</scope>
    <scope>SUBUNIT</scope>
    <scope>REGION</scope>
</reference>
<reference key="9">
    <citation type="journal article" date="2003" name="Biochem. Pharmacol.">
        <title>Cytosolic and mitochondrial deoxyribonucleotidases: activity with substrate analogs, inhibitors and implications for therapy.</title>
        <authorList>
            <person name="Mazzon C."/>
            <person name="Rampazzo C."/>
            <person name="Scaini M.C."/>
            <person name="Gallinaro L."/>
            <person name="Karlsson A."/>
            <person name="Meier C."/>
            <person name="Balzarini J."/>
            <person name="Reichard P."/>
            <person name="Bianchi V."/>
        </authorList>
    </citation>
    <scope>FUNCTION</scope>
    <scope>CATALYTIC ACTIVITY</scope>
</reference>
<reference key="10">
    <citation type="journal article" date="2008" name="Proc. Natl. Acad. Sci. U.S.A.">
        <title>A quantitative atlas of mitotic phosphorylation.</title>
        <authorList>
            <person name="Dephoure N."/>
            <person name="Zhou C."/>
            <person name="Villen J."/>
            <person name="Beausoleil S.A."/>
            <person name="Bakalarski C.E."/>
            <person name="Elledge S.J."/>
            <person name="Gygi S.P."/>
        </authorList>
    </citation>
    <scope>PHOSPHORYLATION [LARGE SCALE ANALYSIS] AT SER-502</scope>
    <scope>IDENTIFICATION BY MASS SPECTROMETRY [LARGE SCALE ANALYSIS]</scope>
    <source>
        <tissue>Cervix carcinoma</tissue>
    </source>
</reference>
<reference key="11">
    <citation type="journal article" date="2011" name="BMC Syst. Biol.">
        <title>Initial characterization of the human central proteome.</title>
        <authorList>
            <person name="Burkard T.R."/>
            <person name="Planyavsky M."/>
            <person name="Kaupe I."/>
            <person name="Breitwieser F.P."/>
            <person name="Buerckstuemmer T."/>
            <person name="Bennett K.L."/>
            <person name="Superti-Furga G."/>
            <person name="Colinge J."/>
        </authorList>
    </citation>
    <scope>IDENTIFICATION BY MASS SPECTROMETRY [LARGE SCALE ANALYSIS]</scope>
</reference>
<reference key="12">
    <citation type="journal article" date="2013" name="J. Proteome Res.">
        <title>Toward a comprehensive characterization of a human cancer cell phosphoproteome.</title>
        <authorList>
            <person name="Zhou H."/>
            <person name="Di Palma S."/>
            <person name="Preisinger C."/>
            <person name="Peng M."/>
            <person name="Polat A.N."/>
            <person name="Heck A.J."/>
            <person name="Mohammed S."/>
        </authorList>
    </citation>
    <scope>PHOSPHORYLATION [LARGE SCALE ANALYSIS] AT SER-418 AND SER-511</scope>
    <scope>IDENTIFICATION BY MASS SPECTROMETRY [LARGE SCALE ANALYSIS]</scope>
    <source>
        <tissue>Cervix carcinoma</tissue>
        <tissue>Erythroleukemia</tissue>
    </source>
</reference>
<reference key="13">
    <citation type="journal article" date="2014" name="Science">
        <title>Exome sequencing links corticospinal motor neuron disease to common neurodegenerative disorders.</title>
        <authorList>
            <person name="Novarino G."/>
            <person name="Fenstermaker A.G."/>
            <person name="Zaki M.S."/>
            <person name="Hofree M."/>
            <person name="Silhavy J.L."/>
            <person name="Heiberg A.D."/>
            <person name="Abdellateef M."/>
            <person name="Rosti B."/>
            <person name="Scott E."/>
            <person name="Mansour L."/>
            <person name="Masri A."/>
            <person name="Kayserili H."/>
            <person name="Al-Aama J.Y."/>
            <person name="Abdel-Salam G.M."/>
            <person name="Karminejad A."/>
            <person name="Kara M."/>
            <person name="Kara B."/>
            <person name="Bozorgmehri B."/>
            <person name="Ben-Omran T."/>
            <person name="Mojahedi F."/>
            <person name="Mahmoud I.G."/>
            <person name="Bouslam N."/>
            <person name="Bouhouche A."/>
            <person name="Benomar A."/>
            <person name="Hanein S."/>
            <person name="Raymond L."/>
            <person name="Forlani S."/>
            <person name="Mascaro M."/>
            <person name="Selim L."/>
            <person name="Shehata N."/>
            <person name="Al-Allawi N."/>
            <person name="Bindu P.S."/>
            <person name="Azam M."/>
            <person name="Gunel M."/>
            <person name="Caglayan A."/>
            <person name="Bilguvar K."/>
            <person name="Tolun A."/>
            <person name="Issa M.Y."/>
            <person name="Schroth J."/>
            <person name="Spencer E.G."/>
            <person name="Rosti R.O."/>
            <person name="Akizu N."/>
            <person name="Vaux K.K."/>
            <person name="Johansen A."/>
            <person name="Koh A.A."/>
            <person name="Megahed H."/>
            <person name="Durr A."/>
            <person name="Brice A."/>
            <person name="Stevanin G."/>
            <person name="Gabriel S.B."/>
            <person name="Ideker T."/>
            <person name="Gleeson J.G."/>
        </authorList>
    </citation>
    <scope>INVOLVEMENT IN SPG45</scope>
</reference>
<reference evidence="21 22 23" key="14">
    <citation type="journal article" date="2007" name="J. Biol. Chem.">
        <title>Crystal structure of human cytosolic 5'-nucleotidase II: insights into allosteric regulation and substrate recognition.</title>
        <authorList>
            <person name="Wallden K."/>
            <person name="Stenmark P."/>
            <person name="Nyman T."/>
            <person name="Flodin S."/>
            <person name="Graeslund S."/>
            <person name="Loppnau P."/>
            <person name="Bianchi V."/>
            <person name="Nordlund P."/>
        </authorList>
    </citation>
    <scope>X-RAY CRYSTALLOGRAPHY (1.5 ANGSTROMS) OF 1-536 IN COMPLEX WITH ADENOSINE AND MAGNESIUM IONS</scope>
    <scope>COFACTOR</scope>
    <scope>SUBUNIT</scope>
</reference>
<reference evidence="24 25 26 27 28 29 30 31" key="15">
    <citation type="journal article" date="2011" name="J. Mol. Biol.">
        <title>Structural basis for the allosteric regulation and substrate recognition of human cytosolic 5'-nucleotidase II.</title>
        <authorList>
            <person name="Wallden K."/>
            <person name="Nordlund P."/>
        </authorList>
    </citation>
    <scope>X-RAY CRYSTALLOGRAPHY (1.90 ANGSTROMS) OF 1-536 OF MUTANT ASN-52 IN COMPLEX WITH MAGNESIUM; IMP; GMP; DGMP; UMP AND ALLOSTERIC EFFECTORS</scope>
    <scope>REACTION MECHANISM</scope>
    <scope>COFACTOR</scope>
    <scope>ACTIVITY REGULATION</scope>
    <scope>SUBSTRATE SPECIFICITY</scope>
    <scope>SUBUNIT</scope>
    <scope>ACTIVE SITE</scope>
    <scope>MUTAGENESIS OF ASP-52</scope>
</reference>
<reference key="16">
    <citation type="journal article" date="2017" name="Am. J. Med. Genet. A">
        <title>Novel homozygous missense mutation in NT5C2 underlying hereditary spastic paraplegia SPG45.</title>
        <authorList>
            <person name="Straussberg R."/>
            <person name="Onoufriadis A."/>
            <person name="Konen O."/>
            <person name="Zouabi Y."/>
            <person name="Cohen L."/>
            <person name="Lee J.Y.W."/>
            <person name="Hsu C.K."/>
            <person name="Simpson M.A."/>
            <person name="McGrath J.A."/>
        </authorList>
    </citation>
    <scope>VARIANT SPG45 PRO-460</scope>
</reference>
<evidence type="ECO:0000250" key="1">
    <source>
        <dbReference type="UniProtKB" id="D3ZMY7"/>
    </source>
</evidence>
<evidence type="ECO:0000250" key="2">
    <source>
        <dbReference type="UniProtKB" id="Q3V1L4"/>
    </source>
</evidence>
<evidence type="ECO:0000256" key="3">
    <source>
        <dbReference type="SAM" id="MobiDB-lite"/>
    </source>
</evidence>
<evidence type="ECO:0000269" key="4">
    <source>
    </source>
</evidence>
<evidence type="ECO:0000269" key="5">
    <source>
    </source>
</evidence>
<evidence type="ECO:0000269" key="6">
    <source>
    </source>
</evidence>
<evidence type="ECO:0000269" key="7">
    <source>
    </source>
</evidence>
<evidence type="ECO:0000269" key="8">
    <source>
    </source>
</evidence>
<evidence type="ECO:0000269" key="9">
    <source>
    </source>
</evidence>
<evidence type="ECO:0000269" key="10">
    <source>
    </source>
</evidence>
<evidence type="ECO:0000269" key="11">
    <source>
    </source>
</evidence>
<evidence type="ECO:0000269" key="12">
    <source ref="4"/>
</evidence>
<evidence type="ECO:0000303" key="13">
    <source>
    </source>
</evidence>
<evidence type="ECO:0000303" key="14">
    <source>
    </source>
</evidence>
<evidence type="ECO:0000303" key="15">
    <source>
    </source>
</evidence>
<evidence type="ECO:0000303" key="16">
    <source>
    </source>
</evidence>
<evidence type="ECO:0000305" key="17"/>
<evidence type="ECO:0000305" key="18">
    <source>
    </source>
</evidence>
<evidence type="ECO:0000305" key="19">
    <source>
    </source>
</evidence>
<evidence type="ECO:0000312" key="20">
    <source>
        <dbReference type="HGNC" id="HGNC:8022"/>
    </source>
</evidence>
<evidence type="ECO:0007744" key="21">
    <source>
        <dbReference type="PDB" id="2J2C"/>
    </source>
</evidence>
<evidence type="ECO:0007744" key="22">
    <source>
        <dbReference type="PDB" id="2JC9"/>
    </source>
</evidence>
<evidence type="ECO:0007744" key="23">
    <source>
        <dbReference type="PDB" id="2JCM"/>
    </source>
</evidence>
<evidence type="ECO:0007744" key="24">
    <source>
        <dbReference type="PDB" id="2XCV"/>
    </source>
</evidence>
<evidence type="ECO:0007744" key="25">
    <source>
        <dbReference type="PDB" id="2XCW"/>
    </source>
</evidence>
<evidence type="ECO:0007744" key="26">
    <source>
        <dbReference type="PDB" id="2XCX"/>
    </source>
</evidence>
<evidence type="ECO:0007744" key="27">
    <source>
        <dbReference type="PDB" id="2XJB"/>
    </source>
</evidence>
<evidence type="ECO:0007744" key="28">
    <source>
        <dbReference type="PDB" id="2XJC"/>
    </source>
</evidence>
<evidence type="ECO:0007744" key="29">
    <source>
        <dbReference type="PDB" id="2XJD"/>
    </source>
</evidence>
<evidence type="ECO:0007744" key="30">
    <source>
        <dbReference type="PDB" id="2XJE"/>
    </source>
</evidence>
<evidence type="ECO:0007744" key="31">
    <source>
        <dbReference type="PDB" id="2XJF"/>
    </source>
</evidence>
<evidence type="ECO:0007744" key="32">
    <source>
    </source>
</evidence>
<evidence type="ECO:0007744" key="33">
    <source>
    </source>
</evidence>
<evidence type="ECO:0007829" key="34">
    <source>
        <dbReference type="PDB" id="2JC9"/>
    </source>
</evidence>
<evidence type="ECO:0007829" key="35">
    <source>
        <dbReference type="PDB" id="5OPL"/>
    </source>
</evidence>
<evidence type="ECO:0007829" key="36">
    <source>
        <dbReference type="PDB" id="5OPN"/>
    </source>
</evidence>
<evidence type="ECO:0007829" key="37">
    <source>
        <dbReference type="PDB" id="5OPO"/>
    </source>
</evidence>
<evidence type="ECO:0007829" key="38">
    <source>
        <dbReference type="PDB" id="6DDL"/>
    </source>
</evidence>
<evidence type="ECO:0007829" key="39">
    <source>
        <dbReference type="PDB" id="6DDQ"/>
    </source>
</evidence>
<evidence type="ECO:0007829" key="40">
    <source>
        <dbReference type="PDB" id="6DE1"/>
    </source>
</evidence>
<comment type="function">
    <text evidence="4 5 6 11">Broad specificity cytosolic 5'-nucleotidase that catalyzes the dephosphorylation of 6-hydroxypurine nucleoside 5'-monophosphates (PubMed:10092873, PubMed:12907246, PubMed:1659319, PubMed:9371705). In addition, possesses a phosphotransferase activity by which it can transfer a phosphate from a donor nucleoside monophosphate to an acceptor nucleoside, preferably inosine, deoxyinosine and guanosine (PubMed:1659319, PubMed:9371705). Has the highest activities for IMP and GMP followed by dIMP, dGMP and XMP (PubMed:10092873, PubMed:12907246, PubMed:1659319, PubMed:9371705). Could also catalyze the transfer of phosphates from pyrimidine monophosphates but with lower efficiency (PubMed:1659319, PubMed:9371705). Through these activities regulates the purine nucleoside/nucleotide pools within the cell (PubMed:10092873, PubMed:12907246, PubMed:1659319, PubMed:9371705).</text>
</comment>
<comment type="catalytic activity">
    <reaction evidence="4 5 6 7 11">
        <text>a ribonucleoside 5'-phosphate + H2O = a ribonucleoside + phosphate</text>
        <dbReference type="Rhea" id="RHEA:12484"/>
        <dbReference type="ChEBI" id="CHEBI:15377"/>
        <dbReference type="ChEBI" id="CHEBI:18254"/>
        <dbReference type="ChEBI" id="CHEBI:43474"/>
        <dbReference type="ChEBI" id="CHEBI:58043"/>
        <dbReference type="EC" id="3.1.3.5"/>
    </reaction>
    <physiologicalReaction direction="left-to-right" evidence="18">
        <dbReference type="Rhea" id="RHEA:12485"/>
    </physiologicalReaction>
</comment>
<comment type="catalytic activity">
    <reaction evidence="6 11">
        <text>a 2'-deoxyribonucleoside + a ribonucleoside 5'-phosphate = a ribonucleoside + a 2'-deoxyribonucleoside 5'-phosphate</text>
        <dbReference type="Rhea" id="RHEA:19961"/>
        <dbReference type="ChEBI" id="CHEBI:18254"/>
        <dbReference type="ChEBI" id="CHEBI:18274"/>
        <dbReference type="ChEBI" id="CHEBI:58043"/>
        <dbReference type="ChEBI" id="CHEBI:65317"/>
        <dbReference type="EC" id="2.7.1.77"/>
    </reaction>
</comment>
<comment type="catalytic activity">
    <reaction evidence="4 5 6 11">
        <text>IMP + H2O = inosine + phosphate</text>
        <dbReference type="Rhea" id="RHEA:27718"/>
        <dbReference type="ChEBI" id="CHEBI:15377"/>
        <dbReference type="ChEBI" id="CHEBI:17596"/>
        <dbReference type="ChEBI" id="CHEBI:43474"/>
        <dbReference type="ChEBI" id="CHEBI:58053"/>
        <dbReference type="EC" id="3.1.3.99"/>
    </reaction>
    <physiologicalReaction direction="left-to-right" evidence="18">
        <dbReference type="Rhea" id="RHEA:27719"/>
    </physiologicalReaction>
</comment>
<comment type="catalytic activity">
    <reaction evidence="1">
        <text>GMP + H2O = guanosine + phosphate</text>
        <dbReference type="Rhea" id="RHEA:27714"/>
        <dbReference type="ChEBI" id="CHEBI:15377"/>
        <dbReference type="ChEBI" id="CHEBI:16750"/>
        <dbReference type="ChEBI" id="CHEBI:43474"/>
        <dbReference type="ChEBI" id="CHEBI:58115"/>
    </reaction>
    <physiologicalReaction direction="left-to-right" evidence="1">
        <dbReference type="Rhea" id="RHEA:27715"/>
    </physiologicalReaction>
</comment>
<comment type="catalytic activity">
    <reaction evidence="1">
        <text>dIMP + H2O = 2'-deoxyinosine + phosphate</text>
        <dbReference type="Rhea" id="RHEA:29383"/>
        <dbReference type="ChEBI" id="CHEBI:15377"/>
        <dbReference type="ChEBI" id="CHEBI:28997"/>
        <dbReference type="ChEBI" id="CHEBI:43474"/>
        <dbReference type="ChEBI" id="CHEBI:61194"/>
    </reaction>
    <physiologicalReaction direction="left-to-right" evidence="1">
        <dbReference type="Rhea" id="RHEA:29384"/>
    </physiologicalReaction>
</comment>
<comment type="catalytic activity">
    <reaction evidence="5 6">
        <text>dGMP + H2O = 2'-deoxyguanosine + phosphate</text>
        <dbReference type="Rhea" id="RHEA:29379"/>
        <dbReference type="ChEBI" id="CHEBI:15377"/>
        <dbReference type="ChEBI" id="CHEBI:17172"/>
        <dbReference type="ChEBI" id="CHEBI:43474"/>
        <dbReference type="ChEBI" id="CHEBI:57673"/>
    </reaction>
    <physiologicalReaction direction="left-to-right" evidence="18">
        <dbReference type="Rhea" id="RHEA:29380"/>
    </physiologicalReaction>
</comment>
<comment type="catalytic activity">
    <reaction evidence="1">
        <text>XMP + H2O = xanthosine + phosphate</text>
        <dbReference type="Rhea" id="RHEA:28530"/>
        <dbReference type="ChEBI" id="CHEBI:15377"/>
        <dbReference type="ChEBI" id="CHEBI:18107"/>
        <dbReference type="ChEBI" id="CHEBI:43474"/>
        <dbReference type="ChEBI" id="CHEBI:57464"/>
    </reaction>
    <physiologicalReaction direction="left-to-right" evidence="1">
        <dbReference type="Rhea" id="RHEA:28531"/>
    </physiologicalReaction>
</comment>
<comment type="catalytic activity">
    <reaction evidence="6 11">
        <text>inosine + GMP = guanosine + IMP</text>
        <dbReference type="Rhea" id="RHEA:69584"/>
        <dbReference type="ChEBI" id="CHEBI:16750"/>
        <dbReference type="ChEBI" id="CHEBI:17596"/>
        <dbReference type="ChEBI" id="CHEBI:58053"/>
        <dbReference type="ChEBI" id="CHEBI:58115"/>
    </reaction>
</comment>
<comment type="catalytic activity">
    <reaction evidence="6 11">
        <text>dGMP + inosine = 2'-deoxyguanosine + IMP</text>
        <dbReference type="Rhea" id="RHEA:69580"/>
        <dbReference type="ChEBI" id="CHEBI:17172"/>
        <dbReference type="ChEBI" id="CHEBI:17596"/>
        <dbReference type="ChEBI" id="CHEBI:57673"/>
        <dbReference type="ChEBI" id="CHEBI:58053"/>
    </reaction>
</comment>
<comment type="catalytic activity">
    <reaction evidence="6 11">
        <text>dIMP + inosine = 2'-deoxyinosine + IMP</text>
        <dbReference type="Rhea" id="RHEA:69572"/>
        <dbReference type="ChEBI" id="CHEBI:17596"/>
        <dbReference type="ChEBI" id="CHEBI:28997"/>
        <dbReference type="ChEBI" id="CHEBI:58053"/>
        <dbReference type="ChEBI" id="CHEBI:61194"/>
    </reaction>
</comment>
<comment type="catalytic activity">
    <reaction evidence="6 11">
        <text>inosine + UMP = uridine + IMP</text>
        <dbReference type="Rhea" id="RHEA:69588"/>
        <dbReference type="ChEBI" id="CHEBI:16704"/>
        <dbReference type="ChEBI" id="CHEBI:17596"/>
        <dbReference type="ChEBI" id="CHEBI:57865"/>
        <dbReference type="ChEBI" id="CHEBI:58053"/>
    </reaction>
</comment>
<comment type="catalytic activity">
    <reaction evidence="6 11">
        <text>inosine + CMP = cytidine + IMP</text>
        <dbReference type="Rhea" id="RHEA:69592"/>
        <dbReference type="ChEBI" id="CHEBI:17562"/>
        <dbReference type="ChEBI" id="CHEBI:17596"/>
        <dbReference type="ChEBI" id="CHEBI:58053"/>
        <dbReference type="ChEBI" id="CHEBI:60377"/>
    </reaction>
</comment>
<comment type="catalytic activity">
    <reaction evidence="6 11">
        <text>inosine + AMP = IMP + adenosine</text>
        <dbReference type="Rhea" id="RHEA:69596"/>
        <dbReference type="ChEBI" id="CHEBI:16335"/>
        <dbReference type="ChEBI" id="CHEBI:17596"/>
        <dbReference type="ChEBI" id="CHEBI:58053"/>
        <dbReference type="ChEBI" id="CHEBI:456215"/>
    </reaction>
</comment>
<comment type="cofactor">
    <cofactor evidence="7 8 21 22 23 24 25 27 28 29 30">
        <name>Mg(2+)</name>
        <dbReference type="ChEBI" id="CHEBI:18420"/>
    </cofactor>
    <text evidence="7 8 21 22 23 24 25 27 28 29 30">Binds 1 Mg(2+) ion per subunit.</text>
</comment>
<comment type="activity regulation">
    <text evidence="4 6 8">Allosterically activated by various compounds including ATP, 2,3-BPG/2,3-Bisphosphoglyceric acid and Ap4A/P1,P4-bis(5'-adenosyl) tetraphosphate (PubMed:10092873, PubMed:1659319, PubMed:21396942). Binding of an allosteric activator is a prerequisiste to magnesium and substrate binding (PubMed:21396942). Inhibited by inorganic phosphate (PubMed:10092873).</text>
</comment>
<comment type="biophysicochemical properties">
    <kinetics>
        <KM evidence="6">20 uM for IMP (in presence of the allosteric activator ATP)</KM>
        <KM evidence="6">83 uM for IMP (in absence of allosteric activator)</KM>
        <Vmax evidence="6">36.7 nmol/min/mg enzyme for the hydrolysis of IMP</Vmax>
        <Vmax evidence="4">0.54 umol/min/mg enzyme for the hydrolysis of IMP (in absence of allosteric activator)</Vmax>
        <Vmax evidence="4">16.5 umol/min/mg enzyme for the hydrolysis of IMP (in the presence of 3 mM ATP)</Vmax>
        <Vmax evidence="6">25.0 nmol/min/mg enzyme for the hydrolysis dGMP (in presence of the allosteric activator ATP)</Vmax>
        <Vmax evidence="6">18.6 nmol/min/mg enzyme for the transfer of phosphate from dIMP to inosine (in presence of the allosteric activator ATP)</Vmax>
        <Vmax evidence="6">15.2 nmol/min/mg enzyme for the transfer of phosphate from GMP to inosine (in presence of the allosteric activator ATP)</Vmax>
        <Vmax evidence="6">14.6 nmol/min/mg enzyme for the transfer of phosphate from IMP to inosine (in presence of the allosteric activator ATP)</Vmax>
        <Vmax evidence="6">14.1 nmol/min/mg enzyme for the transfer of phosphate from dGMP to inosine (in presence of the allosteric activator ATP)</Vmax>
        <Vmax evidence="6">4.9 nmol/min/mg enzyme for the transfer of phosphate from UMP to inosine (in presence of the allosteric activator ATP)</Vmax>
    </kinetics>
</comment>
<comment type="subunit">
    <text evidence="4 7 8">Homotetramer.</text>
</comment>
<comment type="interaction">
    <interactant intactId="EBI-742084">
        <id>P49902</id>
    </interactant>
    <interactant intactId="EBI-355815">
        <id>P48047</id>
        <label>ATP5PO</label>
    </interactant>
    <organismsDiffer>false</organismsDiffer>
    <experiments>3</experiments>
</comment>
<comment type="interaction">
    <interactant intactId="EBI-742084">
        <id>P49902</id>
    </interactant>
    <interactant intactId="EBI-740459">
        <id>P51116</id>
        <label>FXR2</label>
    </interactant>
    <organismsDiffer>false</organismsDiffer>
    <experiments>3</experiments>
</comment>
<comment type="interaction">
    <interactant intactId="EBI-742084">
        <id>P49902</id>
    </interactant>
    <interactant intactId="EBI-748515">
        <id>Q8IVS8</id>
        <label>GLYCTK</label>
    </interactant>
    <organismsDiffer>false</organismsDiffer>
    <experiments>3</experiments>
</comment>
<comment type="interaction">
    <interactant intactId="EBI-742084">
        <id>P49902</id>
    </interactant>
    <interactant intactId="EBI-2558745">
        <id>Q7L9L4</id>
        <label>MOB1B</label>
    </interactant>
    <organismsDiffer>false</organismsDiffer>
    <experiments>3</experiments>
</comment>
<comment type="interaction">
    <interactant intactId="EBI-742084">
        <id>P49902</id>
    </interactant>
    <interactant intactId="EBI-751703">
        <id>Q86TA1</id>
        <label>MOB3B</label>
    </interactant>
    <organismsDiffer>false</organismsDiffer>
    <experiments>3</experiments>
</comment>
<comment type="interaction">
    <interactant intactId="EBI-742084">
        <id>P49902</id>
    </interactant>
    <interactant intactId="EBI-9679267">
        <id>Q70IA8</id>
        <label>MOB3C</label>
    </interactant>
    <organismsDiffer>false</organismsDiffer>
    <experiments>3</experiments>
</comment>
<comment type="interaction">
    <interactant intactId="EBI-742084">
        <id>P49902</id>
    </interactant>
    <interactant intactId="EBI-744782">
        <id>Q9Y5B8</id>
        <label>NME7</label>
    </interactant>
    <organismsDiffer>false</organismsDiffer>
    <experiments>4</experiments>
</comment>
<comment type="interaction">
    <interactant intactId="EBI-742084">
        <id>P49902</id>
    </interactant>
    <interactant intactId="EBI-740486">
        <id>Q6ZVK8</id>
        <label>NUDT18</label>
    </interactant>
    <organismsDiffer>false</organismsDiffer>
    <experiments>3</experiments>
</comment>
<comment type="interaction">
    <interactant intactId="EBI-742084">
        <id>P49902</id>
    </interactant>
    <interactant intactId="EBI-727004">
        <id>O00560</id>
        <label>SDCBP</label>
    </interactant>
    <organismsDiffer>false</organismsDiffer>
    <experiments>3</experiments>
</comment>
<comment type="interaction">
    <interactant intactId="EBI-742084">
        <id>P49902</id>
    </interactant>
    <interactant intactId="EBI-725924">
        <id>Q9NRS6</id>
        <label>SNX15</label>
    </interactant>
    <organismsDiffer>false</organismsDiffer>
    <experiments>2</experiments>
</comment>
<comment type="subcellular location">
    <subcellularLocation>
        <location evidence="11">Cytoplasm</location>
        <location evidence="11">Cytosol</location>
    </subcellularLocation>
</comment>
<comment type="alternative products">
    <event type="alternative splicing"/>
    <isoform>
        <id>P49902-1</id>
        <name>1</name>
        <sequence type="displayed"/>
    </isoform>
    <isoform>
        <id>P49902-2</id>
        <name>2</name>
        <sequence type="described" ref="VSP_054235"/>
    </isoform>
</comment>
<comment type="tissue specificity">
    <text evidence="11">Widely expressed.</text>
</comment>
<comment type="disease" evidence="9 10">
    <disease id="DI-04024">
        <name>Spastic paraplegia 45, autosomal recessive</name>
        <acronym>SPG45</acronym>
        <description>A form of spastic paraplegia, a neurodegenerative disorder characterized by a slow, gradual, progressive weakness and spasticity of the lower limbs. Rate of progression and the severity of symptoms are quite variable. Initial symptoms may include difficulty with balance, weakness and stiffness in the legs, muscle spasms, and dragging the toes when walking. In some forms of the disorder, bladder symptoms (such as incontinence) may appear, or the weakness and stiffness may spread to other parts of the body. Some SPG45 patients manifest intellectual disability, contractures and learning disability.</description>
        <dbReference type="MIM" id="613162"/>
    </disease>
    <text>The disease is caused by variants affecting the gene represented in this entry.</text>
</comment>
<comment type="similarity">
    <text evidence="17">Belongs to the 5'(3')-deoxyribonucleotidase family.</text>
</comment>